<gene>
    <name evidence="1" type="primary">psmB2</name>
    <name type="ordered locus">Igni_0980</name>
</gene>
<proteinExistence type="inferred from homology"/>
<keyword id="KW-0068">Autocatalytic cleavage</keyword>
<keyword id="KW-0963">Cytoplasm</keyword>
<keyword id="KW-0378">Hydrolase</keyword>
<keyword id="KW-0645">Protease</keyword>
<keyword id="KW-0647">Proteasome</keyword>
<keyword id="KW-1185">Reference proteome</keyword>
<keyword id="KW-0888">Threonine protease</keyword>
<keyword id="KW-0865">Zymogen</keyword>
<protein>
    <recommendedName>
        <fullName evidence="1">Proteasome subunit beta 2</fullName>
        <ecNumber evidence="1">3.4.25.1</ecNumber>
    </recommendedName>
    <alternativeName>
        <fullName evidence="1">20S proteasome beta subunit 2</fullName>
    </alternativeName>
    <alternativeName>
        <fullName evidence="1">Proteasome core protein PsmB 2</fullName>
    </alternativeName>
</protein>
<evidence type="ECO:0000255" key="1">
    <source>
        <dbReference type="HAMAP-Rule" id="MF_02113"/>
    </source>
</evidence>
<feature type="propeptide" id="PRO_0000397320" description="Removed in mature form; by autocatalysis" evidence="1">
    <location>
        <begin position="1"/>
        <end position="13"/>
    </location>
</feature>
<feature type="chain" id="PRO_0000397321" description="Proteasome subunit beta 2">
    <location>
        <begin position="14"/>
        <end position="212"/>
    </location>
</feature>
<feature type="active site" description="Nucleophile" evidence="1">
    <location>
        <position position="14"/>
    </location>
</feature>
<comment type="function">
    <text evidence="1">Component of the proteasome core, a large protease complex with broad specificity involved in protein degradation.</text>
</comment>
<comment type="catalytic activity">
    <reaction evidence="1">
        <text>Cleavage of peptide bonds with very broad specificity.</text>
        <dbReference type="EC" id="3.4.25.1"/>
    </reaction>
</comment>
<comment type="activity regulation">
    <text evidence="1">The formation of the proteasomal ATPase PAN-20S proteasome complex, via the docking of the C-termini of PAN into the intersubunit pockets in the alpha-rings, triggers opening of the gate for substrate entry. Interconversion between the open-gate and close-gate conformations leads to a dynamic regulation of the 20S proteasome proteolysis activity.</text>
</comment>
<comment type="subunit">
    <text evidence="1">The 20S proteasome core is composed of 14 alpha and 14 beta subunits that assemble into four stacked heptameric rings, resulting in a barrel-shaped structure. The two inner rings, each composed of seven catalytic beta subunits, are sandwiched by two outer rings, each composed of seven alpha subunits. The catalytic chamber with the active sites is on the inside of the barrel. Has a gated structure, the ends of the cylinder being occluded by the N-termini of the alpha-subunits. Is capped at one or both ends by the proteasome regulatory ATPase, PAN.</text>
</comment>
<comment type="subcellular location">
    <subcellularLocation>
        <location evidence="1">Cytoplasm</location>
    </subcellularLocation>
</comment>
<comment type="similarity">
    <text evidence="1">Belongs to the peptidase T1B family.</text>
</comment>
<accession>A8AB58</accession>
<dbReference type="EC" id="3.4.25.1" evidence="1"/>
<dbReference type="EMBL" id="CP000816">
    <property type="protein sequence ID" value="ABU82160.1"/>
    <property type="molecule type" value="Genomic_DNA"/>
</dbReference>
<dbReference type="RefSeq" id="WP_012123124.1">
    <property type="nucleotide sequence ID" value="NC_009776.1"/>
</dbReference>
<dbReference type="SMR" id="A8AB58"/>
<dbReference type="STRING" id="453591.Igni_0980"/>
<dbReference type="MEROPS" id="T01.002"/>
<dbReference type="GeneID" id="5563149"/>
<dbReference type="KEGG" id="iho:Igni_0980"/>
<dbReference type="eggNOG" id="arCOG00970">
    <property type="taxonomic scope" value="Archaea"/>
</dbReference>
<dbReference type="HOGENOM" id="CLU_035750_7_2_2"/>
<dbReference type="OrthoDB" id="6330at2157"/>
<dbReference type="PhylomeDB" id="A8AB58"/>
<dbReference type="Proteomes" id="UP000000262">
    <property type="component" value="Chromosome"/>
</dbReference>
<dbReference type="GO" id="GO:0005737">
    <property type="term" value="C:cytoplasm"/>
    <property type="evidence" value="ECO:0007669"/>
    <property type="project" value="UniProtKB-SubCell"/>
</dbReference>
<dbReference type="GO" id="GO:0019774">
    <property type="term" value="C:proteasome core complex, beta-subunit complex"/>
    <property type="evidence" value="ECO:0007669"/>
    <property type="project" value="UniProtKB-UniRule"/>
</dbReference>
<dbReference type="GO" id="GO:0004298">
    <property type="term" value="F:threonine-type endopeptidase activity"/>
    <property type="evidence" value="ECO:0007669"/>
    <property type="project" value="UniProtKB-UniRule"/>
</dbReference>
<dbReference type="GO" id="GO:0010498">
    <property type="term" value="P:proteasomal protein catabolic process"/>
    <property type="evidence" value="ECO:0007669"/>
    <property type="project" value="UniProtKB-UniRule"/>
</dbReference>
<dbReference type="FunFam" id="3.60.20.10:FF:000049">
    <property type="entry name" value="Proteasome subunit beta"/>
    <property type="match status" value="1"/>
</dbReference>
<dbReference type="Gene3D" id="3.60.20.10">
    <property type="entry name" value="Glutamine Phosphoribosylpyrophosphate, subunit 1, domain 1"/>
    <property type="match status" value="1"/>
</dbReference>
<dbReference type="HAMAP" id="MF_02113_A">
    <property type="entry name" value="Proteasome_B_A"/>
    <property type="match status" value="1"/>
</dbReference>
<dbReference type="InterPro" id="IPR029055">
    <property type="entry name" value="Ntn_hydrolases_N"/>
</dbReference>
<dbReference type="InterPro" id="IPR019983">
    <property type="entry name" value="Pept_T1A_Psome_bsu_arc"/>
</dbReference>
<dbReference type="InterPro" id="IPR000243">
    <property type="entry name" value="Pept_T1A_subB"/>
</dbReference>
<dbReference type="InterPro" id="IPR001353">
    <property type="entry name" value="Proteasome_sua/b"/>
</dbReference>
<dbReference type="InterPro" id="IPR023333">
    <property type="entry name" value="Proteasome_suB-type"/>
</dbReference>
<dbReference type="NCBIfam" id="TIGR03634">
    <property type="entry name" value="arc_protsome_B"/>
    <property type="match status" value="1"/>
</dbReference>
<dbReference type="PANTHER" id="PTHR32194:SF0">
    <property type="entry name" value="ATP-DEPENDENT PROTEASE SUBUNIT HSLV"/>
    <property type="match status" value="1"/>
</dbReference>
<dbReference type="PANTHER" id="PTHR32194">
    <property type="entry name" value="METALLOPROTEASE TLDD"/>
    <property type="match status" value="1"/>
</dbReference>
<dbReference type="Pfam" id="PF00227">
    <property type="entry name" value="Proteasome"/>
    <property type="match status" value="1"/>
</dbReference>
<dbReference type="PRINTS" id="PR00141">
    <property type="entry name" value="PROTEASOME"/>
</dbReference>
<dbReference type="SUPFAM" id="SSF56235">
    <property type="entry name" value="N-terminal nucleophile aminohydrolases (Ntn hydrolases)"/>
    <property type="match status" value="1"/>
</dbReference>
<dbReference type="PROSITE" id="PS51476">
    <property type="entry name" value="PROTEASOME_BETA_2"/>
    <property type="match status" value="1"/>
</dbReference>
<sequence>MSVDEKVARALKGTTTVGIRSEKAVVLAADKRATAGNFIVHKRVEKIVKISDYMAMTTAGLVADAQVLADVLRMEVKNYELFHKKRMSVKAAATFLSNVLHSARFYPYIVQLLVGGFDTAPRLYSLDWFGTVAEEEFLVTGSGSPMAVGVIEAEYNPNMDLEELVNLAVRAVFAATRRDTASGEGIDVAVIDRNGITMRHYRLGDVIRLVRP</sequence>
<name>PSB2_IGNH4</name>
<organism>
    <name type="scientific">Ignicoccus hospitalis (strain KIN4/I / DSM 18386 / JCM 14125)</name>
    <dbReference type="NCBI Taxonomy" id="453591"/>
    <lineage>
        <taxon>Archaea</taxon>
        <taxon>Thermoproteota</taxon>
        <taxon>Thermoprotei</taxon>
        <taxon>Desulfurococcales</taxon>
        <taxon>Desulfurococcaceae</taxon>
        <taxon>Ignicoccus</taxon>
    </lineage>
</organism>
<reference key="1">
    <citation type="journal article" date="2008" name="Genome Biol.">
        <title>A genomic analysis of the archaeal system Ignicoccus hospitalis-Nanoarchaeum equitans.</title>
        <authorList>
            <person name="Podar M."/>
            <person name="Anderson I."/>
            <person name="Makarova K.S."/>
            <person name="Elkins J.G."/>
            <person name="Ivanova N."/>
            <person name="Wall M.A."/>
            <person name="Lykidis A."/>
            <person name="Mavromatis K."/>
            <person name="Sun H."/>
            <person name="Hudson M.E."/>
            <person name="Chen W."/>
            <person name="Deciu C."/>
            <person name="Hutchison D."/>
            <person name="Eads J.R."/>
            <person name="Anderson A."/>
            <person name="Fernandes F."/>
            <person name="Szeto E."/>
            <person name="Lapidus A."/>
            <person name="Kyrpides N.C."/>
            <person name="Saier M.H. Jr."/>
            <person name="Richardson P.M."/>
            <person name="Rachel R."/>
            <person name="Huber H."/>
            <person name="Eisen J.A."/>
            <person name="Koonin E.V."/>
            <person name="Keller M."/>
            <person name="Stetter K.O."/>
        </authorList>
    </citation>
    <scope>NUCLEOTIDE SEQUENCE [LARGE SCALE GENOMIC DNA]</scope>
    <source>
        <strain>KIN4/I / DSM 18386 / JCM 14125</strain>
    </source>
</reference>